<reference key="1">
    <citation type="journal article" date="2008" name="Appl. Environ. Microbiol.">
        <title>The genome of Polaromonas sp. strain JS666: insights into the evolution of a hydrocarbon- and xenobiotic-degrading bacterium, and features of relevance to biotechnology.</title>
        <authorList>
            <person name="Mattes T.E."/>
            <person name="Alexander A.K."/>
            <person name="Richardson P.M."/>
            <person name="Munk A.C."/>
            <person name="Han C.S."/>
            <person name="Stothard P."/>
            <person name="Coleman N.V."/>
        </authorList>
    </citation>
    <scope>NUCLEOTIDE SEQUENCE [LARGE SCALE GENOMIC DNA]</scope>
    <source>
        <strain>JS666 / ATCC BAA-500</strain>
    </source>
</reference>
<feature type="chain" id="PRO_0000335498" description="Translation initiation factor IF-2">
    <location>
        <begin position="1"/>
        <end position="968"/>
    </location>
</feature>
<feature type="domain" description="tr-type G">
    <location>
        <begin position="468"/>
        <end position="635"/>
    </location>
</feature>
<feature type="region of interest" description="Disordered" evidence="3">
    <location>
        <begin position="305"/>
        <end position="376"/>
    </location>
</feature>
<feature type="region of interest" description="G1" evidence="1">
    <location>
        <begin position="477"/>
        <end position="484"/>
    </location>
</feature>
<feature type="region of interest" description="G2" evidence="1">
    <location>
        <begin position="502"/>
        <end position="506"/>
    </location>
</feature>
<feature type="region of interest" description="G3" evidence="1">
    <location>
        <begin position="523"/>
        <end position="526"/>
    </location>
</feature>
<feature type="region of interest" description="G4" evidence="1">
    <location>
        <begin position="577"/>
        <end position="580"/>
    </location>
</feature>
<feature type="region of interest" description="G5" evidence="1">
    <location>
        <begin position="613"/>
        <end position="615"/>
    </location>
</feature>
<feature type="compositionally biased region" description="Low complexity" evidence="3">
    <location>
        <begin position="305"/>
        <end position="319"/>
    </location>
</feature>
<feature type="binding site" evidence="2">
    <location>
        <begin position="477"/>
        <end position="484"/>
    </location>
    <ligand>
        <name>GTP</name>
        <dbReference type="ChEBI" id="CHEBI:37565"/>
    </ligand>
</feature>
<feature type="binding site" evidence="2">
    <location>
        <begin position="523"/>
        <end position="527"/>
    </location>
    <ligand>
        <name>GTP</name>
        <dbReference type="ChEBI" id="CHEBI:37565"/>
    </ligand>
</feature>
<feature type="binding site" evidence="2">
    <location>
        <begin position="577"/>
        <end position="580"/>
    </location>
    <ligand>
        <name>GTP</name>
        <dbReference type="ChEBI" id="CHEBI:37565"/>
    </ligand>
</feature>
<comment type="function">
    <text evidence="2">One of the essential components for the initiation of protein synthesis. Protects formylmethionyl-tRNA from spontaneous hydrolysis and promotes its binding to the 30S ribosomal subunits. Also involved in the hydrolysis of GTP during the formation of the 70S ribosomal complex.</text>
</comment>
<comment type="subcellular location">
    <subcellularLocation>
        <location evidence="2">Cytoplasm</location>
    </subcellularLocation>
</comment>
<comment type="similarity">
    <text evidence="2">Belongs to the TRAFAC class translation factor GTPase superfamily. Classic translation factor GTPase family. IF-2 subfamily.</text>
</comment>
<keyword id="KW-0963">Cytoplasm</keyword>
<keyword id="KW-0342">GTP-binding</keyword>
<keyword id="KW-0396">Initiation factor</keyword>
<keyword id="KW-0547">Nucleotide-binding</keyword>
<keyword id="KW-0648">Protein biosynthesis</keyword>
<keyword id="KW-1185">Reference proteome</keyword>
<dbReference type="EMBL" id="CP000316">
    <property type="protein sequence ID" value="ABE44345.1"/>
    <property type="molecule type" value="Genomic_DNA"/>
</dbReference>
<dbReference type="RefSeq" id="WP_011483343.1">
    <property type="nucleotide sequence ID" value="NC_007948.1"/>
</dbReference>
<dbReference type="SMR" id="Q12AU7"/>
<dbReference type="STRING" id="296591.Bpro_2426"/>
<dbReference type="KEGG" id="pol:Bpro_2426"/>
<dbReference type="eggNOG" id="COG0532">
    <property type="taxonomic scope" value="Bacteria"/>
</dbReference>
<dbReference type="HOGENOM" id="CLU_006301_6_0_4"/>
<dbReference type="OrthoDB" id="9811804at2"/>
<dbReference type="Proteomes" id="UP000001983">
    <property type="component" value="Chromosome"/>
</dbReference>
<dbReference type="GO" id="GO:0005829">
    <property type="term" value="C:cytosol"/>
    <property type="evidence" value="ECO:0007669"/>
    <property type="project" value="TreeGrafter"/>
</dbReference>
<dbReference type="GO" id="GO:0005525">
    <property type="term" value="F:GTP binding"/>
    <property type="evidence" value="ECO:0007669"/>
    <property type="project" value="UniProtKB-KW"/>
</dbReference>
<dbReference type="GO" id="GO:0003924">
    <property type="term" value="F:GTPase activity"/>
    <property type="evidence" value="ECO:0007669"/>
    <property type="project" value="UniProtKB-UniRule"/>
</dbReference>
<dbReference type="GO" id="GO:0003743">
    <property type="term" value="F:translation initiation factor activity"/>
    <property type="evidence" value="ECO:0007669"/>
    <property type="project" value="UniProtKB-UniRule"/>
</dbReference>
<dbReference type="CDD" id="cd01887">
    <property type="entry name" value="IF2_eIF5B"/>
    <property type="match status" value="1"/>
</dbReference>
<dbReference type="CDD" id="cd03702">
    <property type="entry name" value="IF2_mtIF2_II"/>
    <property type="match status" value="1"/>
</dbReference>
<dbReference type="CDD" id="cd03692">
    <property type="entry name" value="mtIF2_IVc"/>
    <property type="match status" value="1"/>
</dbReference>
<dbReference type="FunFam" id="2.40.30.10:FF:000007">
    <property type="entry name" value="Translation initiation factor IF-2"/>
    <property type="match status" value="1"/>
</dbReference>
<dbReference type="FunFam" id="2.40.30.10:FF:000008">
    <property type="entry name" value="Translation initiation factor IF-2"/>
    <property type="match status" value="1"/>
</dbReference>
<dbReference type="FunFam" id="3.40.50.10050:FF:000001">
    <property type="entry name" value="Translation initiation factor IF-2"/>
    <property type="match status" value="1"/>
</dbReference>
<dbReference type="FunFam" id="3.40.50.300:FF:000019">
    <property type="entry name" value="Translation initiation factor IF-2"/>
    <property type="match status" value="1"/>
</dbReference>
<dbReference type="Gene3D" id="3.40.50.300">
    <property type="entry name" value="P-loop containing nucleotide triphosphate hydrolases"/>
    <property type="match status" value="1"/>
</dbReference>
<dbReference type="Gene3D" id="3.30.56.50">
    <property type="entry name" value="Putative DNA-binding domain, N-terminal subdomain of bacterial translation initiation factor IF2"/>
    <property type="match status" value="1"/>
</dbReference>
<dbReference type="Gene3D" id="2.40.30.10">
    <property type="entry name" value="Translation factors"/>
    <property type="match status" value="2"/>
</dbReference>
<dbReference type="Gene3D" id="3.40.50.10050">
    <property type="entry name" value="Translation initiation factor IF- 2, domain 3"/>
    <property type="match status" value="1"/>
</dbReference>
<dbReference type="HAMAP" id="MF_00100_B">
    <property type="entry name" value="IF_2_B"/>
    <property type="match status" value="1"/>
</dbReference>
<dbReference type="InterPro" id="IPR009061">
    <property type="entry name" value="DNA-bd_dom_put_sf"/>
</dbReference>
<dbReference type="InterPro" id="IPR053905">
    <property type="entry name" value="EF-G-like_DII"/>
</dbReference>
<dbReference type="InterPro" id="IPR013575">
    <property type="entry name" value="IF2_assoc_dom_bac"/>
</dbReference>
<dbReference type="InterPro" id="IPR044145">
    <property type="entry name" value="IF2_II"/>
</dbReference>
<dbReference type="InterPro" id="IPR006847">
    <property type="entry name" value="IF2_N"/>
</dbReference>
<dbReference type="InterPro" id="IPR027417">
    <property type="entry name" value="P-loop_NTPase"/>
</dbReference>
<dbReference type="InterPro" id="IPR005225">
    <property type="entry name" value="Small_GTP-bd"/>
</dbReference>
<dbReference type="InterPro" id="IPR000795">
    <property type="entry name" value="T_Tr_GTP-bd_dom"/>
</dbReference>
<dbReference type="InterPro" id="IPR000178">
    <property type="entry name" value="TF_IF2_bacterial-like"/>
</dbReference>
<dbReference type="InterPro" id="IPR015760">
    <property type="entry name" value="TIF_IF2"/>
</dbReference>
<dbReference type="InterPro" id="IPR023115">
    <property type="entry name" value="TIF_IF2_dom3"/>
</dbReference>
<dbReference type="InterPro" id="IPR036925">
    <property type="entry name" value="TIF_IF2_dom3_sf"/>
</dbReference>
<dbReference type="InterPro" id="IPR009000">
    <property type="entry name" value="Transl_B-barrel_sf"/>
</dbReference>
<dbReference type="NCBIfam" id="TIGR00487">
    <property type="entry name" value="IF-2"/>
    <property type="match status" value="1"/>
</dbReference>
<dbReference type="NCBIfam" id="TIGR00231">
    <property type="entry name" value="small_GTP"/>
    <property type="match status" value="1"/>
</dbReference>
<dbReference type="PANTHER" id="PTHR43381:SF5">
    <property type="entry name" value="TR-TYPE G DOMAIN-CONTAINING PROTEIN"/>
    <property type="match status" value="1"/>
</dbReference>
<dbReference type="PANTHER" id="PTHR43381">
    <property type="entry name" value="TRANSLATION INITIATION FACTOR IF-2-RELATED"/>
    <property type="match status" value="1"/>
</dbReference>
<dbReference type="Pfam" id="PF22042">
    <property type="entry name" value="EF-G_D2"/>
    <property type="match status" value="1"/>
</dbReference>
<dbReference type="Pfam" id="PF00009">
    <property type="entry name" value="GTP_EFTU"/>
    <property type="match status" value="1"/>
</dbReference>
<dbReference type="Pfam" id="PF11987">
    <property type="entry name" value="IF-2"/>
    <property type="match status" value="1"/>
</dbReference>
<dbReference type="Pfam" id="PF08364">
    <property type="entry name" value="IF2_assoc"/>
    <property type="match status" value="1"/>
</dbReference>
<dbReference type="Pfam" id="PF04760">
    <property type="entry name" value="IF2_N"/>
    <property type="match status" value="2"/>
</dbReference>
<dbReference type="SUPFAM" id="SSF52156">
    <property type="entry name" value="Initiation factor IF2/eIF5b, domain 3"/>
    <property type="match status" value="1"/>
</dbReference>
<dbReference type="SUPFAM" id="SSF52540">
    <property type="entry name" value="P-loop containing nucleoside triphosphate hydrolases"/>
    <property type="match status" value="1"/>
</dbReference>
<dbReference type="SUPFAM" id="SSF46955">
    <property type="entry name" value="Putative DNA-binding domain"/>
    <property type="match status" value="1"/>
</dbReference>
<dbReference type="SUPFAM" id="SSF50447">
    <property type="entry name" value="Translation proteins"/>
    <property type="match status" value="2"/>
</dbReference>
<dbReference type="PROSITE" id="PS51722">
    <property type="entry name" value="G_TR_2"/>
    <property type="match status" value="1"/>
</dbReference>
<dbReference type="PROSITE" id="PS01176">
    <property type="entry name" value="IF2"/>
    <property type="match status" value="1"/>
</dbReference>
<gene>
    <name evidence="2" type="primary">infB</name>
    <name type="ordered locus">Bpro_2426</name>
</gene>
<proteinExistence type="inferred from homology"/>
<organism>
    <name type="scientific">Polaromonas sp. (strain JS666 / ATCC BAA-500)</name>
    <dbReference type="NCBI Taxonomy" id="296591"/>
    <lineage>
        <taxon>Bacteria</taxon>
        <taxon>Pseudomonadati</taxon>
        <taxon>Pseudomonadota</taxon>
        <taxon>Betaproteobacteria</taxon>
        <taxon>Burkholderiales</taxon>
        <taxon>Comamonadaceae</taxon>
        <taxon>Polaromonas</taxon>
    </lineage>
</organism>
<accession>Q12AU7</accession>
<evidence type="ECO:0000250" key="1"/>
<evidence type="ECO:0000255" key="2">
    <source>
        <dbReference type="HAMAP-Rule" id="MF_00100"/>
    </source>
</evidence>
<evidence type="ECO:0000256" key="3">
    <source>
        <dbReference type="SAM" id="MobiDB-lite"/>
    </source>
</evidence>
<name>IF2_POLSJ</name>
<protein>
    <recommendedName>
        <fullName evidence="2">Translation initiation factor IF-2</fullName>
    </recommendedName>
</protein>
<sequence>MSSTTTVAEFAAELNKPTATLIEQLTSAGVAKVQASDHLSEVDKQKLLGYLQASHGTVTAERKKITLVKKSTTEIKQADATGKARTIQVEVRKKRTFVKREDGSDLPAEEVQPEVVAAPQVPVIDDAELIRREEEASRHAELLRRQEAELAEKRRLREELDAKEAARELERQAAAESAKAAAEAAEAAKKAKPVTGKAKEVAQPAGAEASRAAAETAVAEEAAATKAADAAVVQAAAKAKATAEFQADAAKAQDLQERRRKAEAEAAGIRAMMSAPKRVLVPHVDPKAAIKGTLHKPAVAPGAAKPAAAAGAPGAPGAAGKKEVKSENLSSTWKDDAAKKKGIPSRGATAVPGRGNFRSGPRGRRSNDRDARPESTFVAPTEFKVIEVHVPETITVAELAHKMSVKSSEVIKHLMKLGQMVTINQPLDQDTAMIVVEEMGHKAITAALDDPEAFTDDDVQGQQAEALPRAPVVTVMGHVDHGKTSLLDYIRRAKVAAGEAGGITQHIGAYHVETPRGMISFLDTPGHEAFTAMRARGAQATDIVILVVAADDGVMPQTKEAIKHAKAAGVPIVVAINKIDKADANMDRVKGELVTEEVIPEEFGGESPFVGVSARTGEGVDTLLEQVLLQAEVLELRAPVEALAKGLVIEAQLDKGRGPVATVLIQSGTLKTGDVVLAGSTYGRVRAMLDENGKPIKTAGPSIPVEIQGLTEVPQAGDEFMVMTDERRAREIATYRAGKFRNTKLAKQQASKLENMFSDISAGEVKMLPIIIKADVQGSQEALAQSLLKLSTDEVKVQLVYSGVGGISESDVNLAIASKAVLIGFNTRADAQARKQAENNGIDIRYYNIIYDAVDELKAAMSGMLTPDKKEEVIGTAEIRQVFKVSKIGSIAGCMVTAGIVRRTARLRLLRDNVVIFTGELDSLKRFKDDVKEVKESFECGLNIKNYNDIQEGDILEFFEIKEVARTL</sequence>